<evidence type="ECO:0000255" key="1">
    <source>
        <dbReference type="HAMAP-Rule" id="MF_00692"/>
    </source>
</evidence>
<protein>
    <recommendedName>
        <fullName evidence="1">Protein nucleotidyltransferase YdiU</fullName>
        <ecNumber evidence="1">2.7.7.-</ecNumber>
    </recommendedName>
    <alternativeName>
        <fullName evidence="1">Protein adenylyltransferase YdiU</fullName>
        <ecNumber evidence="1">2.7.7.108</ecNumber>
    </alternativeName>
    <alternativeName>
        <fullName evidence="1">Protein uridylyltransferase YdiU</fullName>
        <ecNumber evidence="1">2.7.7.-</ecNumber>
    </alternativeName>
</protein>
<keyword id="KW-0067">ATP-binding</keyword>
<keyword id="KW-0460">Magnesium</keyword>
<keyword id="KW-0464">Manganese</keyword>
<keyword id="KW-0479">Metal-binding</keyword>
<keyword id="KW-0547">Nucleotide-binding</keyword>
<keyword id="KW-0548">Nucleotidyltransferase</keyword>
<keyword id="KW-0808">Transferase</keyword>
<sequence>MKERKVIIKTGLNLENSYTSLPEIFFTRQSPSRVPSPKLAVLNYSLITSLGLNAQVLQSADGVEILAGNKTPEEAIPISQAYAGHQFGHFTMLGDGRAILLGEHITPQGERFDIQLKGSGKTPYSRGGDGKAALGPMLREYIISEAMNALGIPTTRSLAVVTTGESIMRETELSGAILTRVAASHIRVGTFEYVSRWGTVEELRALANYTLQRHFKKGYDKENPYLFLLQEVIEKQAELIAKWQLVGFVHGVMNTDNMTISGETIDYGPCAFMDVYDPETVFSSIDIYGRYAYGNQPNIATWNLARFAETLLPLLHINPNEAIKIAENAVSDFTKLYKNNWLSGMRAKLGIFNEELEDEYLIEDLLSIMHKYGADYTNTFRALTFDNIEDTVLGGKVEFDKWYKLWQERLTRQEEAKLSSKQLMKSSNPSVIPRNHRVEEALEAAVKEGDYSVMEKLLDALSKPYDHSKEQDYYSKLPEPSTCPYQTYCGT</sequence>
<proteinExistence type="inferred from homology"/>
<feature type="chain" id="PRO_1000132097" description="Protein nucleotidyltransferase YdiU">
    <location>
        <begin position="1"/>
        <end position="491"/>
    </location>
</feature>
<feature type="active site" description="Proton acceptor" evidence="1">
    <location>
        <position position="256"/>
    </location>
</feature>
<feature type="binding site" evidence="1">
    <location>
        <position position="94"/>
    </location>
    <ligand>
        <name>ATP</name>
        <dbReference type="ChEBI" id="CHEBI:30616"/>
    </ligand>
</feature>
<feature type="binding site" evidence="1">
    <location>
        <position position="96"/>
    </location>
    <ligand>
        <name>ATP</name>
        <dbReference type="ChEBI" id="CHEBI:30616"/>
    </ligand>
</feature>
<feature type="binding site" evidence="1">
    <location>
        <position position="97"/>
    </location>
    <ligand>
        <name>ATP</name>
        <dbReference type="ChEBI" id="CHEBI:30616"/>
    </ligand>
</feature>
<feature type="binding site" evidence="1">
    <location>
        <position position="117"/>
    </location>
    <ligand>
        <name>ATP</name>
        <dbReference type="ChEBI" id="CHEBI:30616"/>
    </ligand>
</feature>
<feature type="binding site" evidence="1">
    <location>
        <position position="129"/>
    </location>
    <ligand>
        <name>ATP</name>
        <dbReference type="ChEBI" id="CHEBI:30616"/>
    </ligand>
</feature>
<feature type="binding site" evidence="1">
    <location>
        <position position="130"/>
    </location>
    <ligand>
        <name>ATP</name>
        <dbReference type="ChEBI" id="CHEBI:30616"/>
    </ligand>
</feature>
<feature type="binding site" evidence="1">
    <location>
        <position position="180"/>
    </location>
    <ligand>
        <name>ATP</name>
        <dbReference type="ChEBI" id="CHEBI:30616"/>
    </ligand>
</feature>
<feature type="binding site" evidence="1">
    <location>
        <position position="187"/>
    </location>
    <ligand>
        <name>ATP</name>
        <dbReference type="ChEBI" id="CHEBI:30616"/>
    </ligand>
</feature>
<feature type="binding site" evidence="1">
    <location>
        <position position="257"/>
    </location>
    <ligand>
        <name>Mg(2+)</name>
        <dbReference type="ChEBI" id="CHEBI:18420"/>
    </ligand>
</feature>
<feature type="binding site" evidence="1">
    <location>
        <position position="266"/>
    </location>
    <ligand>
        <name>ATP</name>
        <dbReference type="ChEBI" id="CHEBI:30616"/>
    </ligand>
</feature>
<feature type="binding site" evidence="1">
    <location>
        <position position="266"/>
    </location>
    <ligand>
        <name>Mg(2+)</name>
        <dbReference type="ChEBI" id="CHEBI:18420"/>
    </ligand>
</feature>
<dbReference type="EC" id="2.7.7.-" evidence="1"/>
<dbReference type="EC" id="2.7.7.108" evidence="1"/>
<dbReference type="EMBL" id="CP000726">
    <property type="protein sequence ID" value="ABS33454.1"/>
    <property type="molecule type" value="Genomic_DNA"/>
</dbReference>
<dbReference type="RefSeq" id="WP_011948835.1">
    <property type="nucleotide sequence ID" value="NC_009697.1"/>
</dbReference>
<dbReference type="SMR" id="A7FT79"/>
<dbReference type="KEGG" id="cba:CLB_1226"/>
<dbReference type="HOGENOM" id="CLU_010245_4_1_9"/>
<dbReference type="GO" id="GO:0070733">
    <property type="term" value="F:AMPylase activity"/>
    <property type="evidence" value="ECO:0007669"/>
    <property type="project" value="RHEA"/>
</dbReference>
<dbReference type="GO" id="GO:0005524">
    <property type="term" value="F:ATP binding"/>
    <property type="evidence" value="ECO:0007669"/>
    <property type="project" value="UniProtKB-UniRule"/>
</dbReference>
<dbReference type="GO" id="GO:0000287">
    <property type="term" value="F:magnesium ion binding"/>
    <property type="evidence" value="ECO:0007669"/>
    <property type="project" value="UniProtKB-UniRule"/>
</dbReference>
<dbReference type="HAMAP" id="MF_00692">
    <property type="entry name" value="YdiU_SelO"/>
    <property type="match status" value="1"/>
</dbReference>
<dbReference type="InterPro" id="IPR003846">
    <property type="entry name" value="SelO"/>
</dbReference>
<dbReference type="NCBIfam" id="NF000658">
    <property type="entry name" value="PRK00029.1"/>
    <property type="match status" value="1"/>
</dbReference>
<dbReference type="PANTHER" id="PTHR12153:SF15">
    <property type="entry name" value="PROTEIN ADENYLYLTRANSFERASE SELO, MITOCHONDRIAL"/>
    <property type="match status" value="1"/>
</dbReference>
<dbReference type="PANTHER" id="PTHR12153">
    <property type="entry name" value="SELENOPROTEIN O"/>
    <property type="match status" value="1"/>
</dbReference>
<dbReference type="Pfam" id="PF02696">
    <property type="entry name" value="SelO"/>
    <property type="match status" value="1"/>
</dbReference>
<accession>A7FT79</accession>
<comment type="function">
    <text evidence="1">Nucleotidyltransferase involved in the post-translational modification of proteins. It can catalyze the addition of adenosine monophosphate (AMP) or uridine monophosphate (UMP) to a protein, resulting in modifications known as AMPylation and UMPylation.</text>
</comment>
<comment type="catalytic activity">
    <reaction evidence="1">
        <text>L-seryl-[protein] + ATP = 3-O-(5'-adenylyl)-L-seryl-[protein] + diphosphate</text>
        <dbReference type="Rhea" id="RHEA:58120"/>
        <dbReference type="Rhea" id="RHEA-COMP:9863"/>
        <dbReference type="Rhea" id="RHEA-COMP:15073"/>
        <dbReference type="ChEBI" id="CHEBI:29999"/>
        <dbReference type="ChEBI" id="CHEBI:30616"/>
        <dbReference type="ChEBI" id="CHEBI:33019"/>
        <dbReference type="ChEBI" id="CHEBI:142516"/>
        <dbReference type="EC" id="2.7.7.108"/>
    </reaction>
</comment>
<comment type="catalytic activity">
    <reaction evidence="1">
        <text>L-threonyl-[protein] + ATP = 3-O-(5'-adenylyl)-L-threonyl-[protein] + diphosphate</text>
        <dbReference type="Rhea" id="RHEA:54292"/>
        <dbReference type="Rhea" id="RHEA-COMP:11060"/>
        <dbReference type="Rhea" id="RHEA-COMP:13847"/>
        <dbReference type="ChEBI" id="CHEBI:30013"/>
        <dbReference type="ChEBI" id="CHEBI:30616"/>
        <dbReference type="ChEBI" id="CHEBI:33019"/>
        <dbReference type="ChEBI" id="CHEBI:138113"/>
        <dbReference type="EC" id="2.7.7.108"/>
    </reaction>
</comment>
<comment type="catalytic activity">
    <reaction evidence="1">
        <text>L-tyrosyl-[protein] + ATP = O-(5'-adenylyl)-L-tyrosyl-[protein] + diphosphate</text>
        <dbReference type="Rhea" id="RHEA:54288"/>
        <dbReference type="Rhea" id="RHEA-COMP:10136"/>
        <dbReference type="Rhea" id="RHEA-COMP:13846"/>
        <dbReference type="ChEBI" id="CHEBI:30616"/>
        <dbReference type="ChEBI" id="CHEBI:33019"/>
        <dbReference type="ChEBI" id="CHEBI:46858"/>
        <dbReference type="ChEBI" id="CHEBI:83624"/>
        <dbReference type="EC" id="2.7.7.108"/>
    </reaction>
</comment>
<comment type="catalytic activity">
    <reaction evidence="1">
        <text>L-histidyl-[protein] + UTP = N(tele)-(5'-uridylyl)-L-histidyl-[protein] + diphosphate</text>
        <dbReference type="Rhea" id="RHEA:83891"/>
        <dbReference type="Rhea" id="RHEA-COMP:9745"/>
        <dbReference type="Rhea" id="RHEA-COMP:20239"/>
        <dbReference type="ChEBI" id="CHEBI:29979"/>
        <dbReference type="ChEBI" id="CHEBI:33019"/>
        <dbReference type="ChEBI" id="CHEBI:46398"/>
        <dbReference type="ChEBI" id="CHEBI:233474"/>
    </reaction>
</comment>
<comment type="catalytic activity">
    <reaction evidence="1">
        <text>L-seryl-[protein] + UTP = O-(5'-uridylyl)-L-seryl-[protein] + diphosphate</text>
        <dbReference type="Rhea" id="RHEA:64604"/>
        <dbReference type="Rhea" id="RHEA-COMP:9863"/>
        <dbReference type="Rhea" id="RHEA-COMP:16635"/>
        <dbReference type="ChEBI" id="CHEBI:29999"/>
        <dbReference type="ChEBI" id="CHEBI:33019"/>
        <dbReference type="ChEBI" id="CHEBI:46398"/>
        <dbReference type="ChEBI" id="CHEBI:156051"/>
    </reaction>
</comment>
<comment type="catalytic activity">
    <reaction evidence="1">
        <text>L-tyrosyl-[protein] + UTP = O-(5'-uridylyl)-L-tyrosyl-[protein] + diphosphate</text>
        <dbReference type="Rhea" id="RHEA:83887"/>
        <dbReference type="Rhea" id="RHEA-COMP:10136"/>
        <dbReference type="Rhea" id="RHEA-COMP:20238"/>
        <dbReference type="ChEBI" id="CHEBI:33019"/>
        <dbReference type="ChEBI" id="CHEBI:46398"/>
        <dbReference type="ChEBI" id="CHEBI:46858"/>
        <dbReference type="ChEBI" id="CHEBI:90602"/>
    </reaction>
</comment>
<comment type="cofactor">
    <cofactor evidence="1">
        <name>Mg(2+)</name>
        <dbReference type="ChEBI" id="CHEBI:18420"/>
    </cofactor>
    <cofactor evidence="1">
        <name>Mn(2+)</name>
        <dbReference type="ChEBI" id="CHEBI:29035"/>
    </cofactor>
</comment>
<comment type="similarity">
    <text evidence="1">Belongs to the SELO family.</text>
</comment>
<gene>
    <name evidence="1" type="primary">ydiU</name>
    <name evidence="1" type="synonym">selO</name>
    <name type="ordered locus">CLB_1226</name>
</gene>
<name>SELO_CLOB1</name>
<organism>
    <name type="scientific">Clostridium botulinum (strain ATCC 19397 / Type A)</name>
    <dbReference type="NCBI Taxonomy" id="441770"/>
    <lineage>
        <taxon>Bacteria</taxon>
        <taxon>Bacillati</taxon>
        <taxon>Bacillota</taxon>
        <taxon>Clostridia</taxon>
        <taxon>Eubacteriales</taxon>
        <taxon>Clostridiaceae</taxon>
        <taxon>Clostridium</taxon>
    </lineage>
</organism>
<reference key="1">
    <citation type="journal article" date="2007" name="PLoS ONE">
        <title>Analysis of the neurotoxin complex genes in Clostridium botulinum A1-A4 and B1 strains: BoNT/A3, /Ba4 and /B1 clusters are located within plasmids.</title>
        <authorList>
            <person name="Smith T.J."/>
            <person name="Hill K.K."/>
            <person name="Foley B.T."/>
            <person name="Detter J.C."/>
            <person name="Munk A.C."/>
            <person name="Bruce D.C."/>
            <person name="Doggett N.A."/>
            <person name="Smith L.A."/>
            <person name="Marks J.D."/>
            <person name="Xie G."/>
            <person name="Brettin T.S."/>
        </authorList>
    </citation>
    <scope>NUCLEOTIDE SEQUENCE [LARGE SCALE GENOMIC DNA]</scope>
    <source>
        <strain>ATCC 19397 / Type A</strain>
    </source>
</reference>